<comment type="function">
    <text evidence="1">One of the primary rRNA binding proteins, it binds directly to 16S rRNA where it nucleates assembly of the head domain of the 30S subunit. Is located at the subunit interface close to the decoding center, probably blocks exit of the E-site tRNA.</text>
</comment>
<comment type="subunit">
    <text evidence="1">Part of the 30S ribosomal subunit. Contacts proteins S9 and S11.</text>
</comment>
<comment type="similarity">
    <text evidence="1">Belongs to the universal ribosomal protein uS7 family.</text>
</comment>
<protein>
    <recommendedName>
        <fullName evidence="1">Small ribosomal subunit protein uS7</fullName>
    </recommendedName>
    <alternativeName>
        <fullName evidence="2">30S ribosomal protein S7</fullName>
    </alternativeName>
</protein>
<evidence type="ECO:0000255" key="1">
    <source>
        <dbReference type="HAMAP-Rule" id="MF_00480"/>
    </source>
</evidence>
<evidence type="ECO:0000305" key="2"/>
<sequence>MSRRHKAEKREINPDPKFGDLVITKFMNAVMLHGKKSVAESIVYGALDAIEAKAKSEPVALFHQALDNVAPHIEVRSRRVGGATYQVPVDVRPERRQALAIRWLINAARGRNETTMVDRLSGELLDAANNRGSAVKKREDTHRMAEANRAFSHYRW</sequence>
<name>RS7_BRUSU</name>
<dbReference type="EMBL" id="AE014291">
    <property type="protein sequence ID" value="AAN30156.1"/>
    <property type="molecule type" value="Genomic_DNA"/>
</dbReference>
<dbReference type="EMBL" id="CP002997">
    <property type="protein sequence ID" value="AEM18574.1"/>
    <property type="molecule type" value="Genomic_DNA"/>
</dbReference>
<dbReference type="RefSeq" id="WP_002964365.1">
    <property type="nucleotide sequence ID" value="NZ_KN046804.1"/>
</dbReference>
<dbReference type="SMR" id="Q8G074"/>
<dbReference type="GeneID" id="97533521"/>
<dbReference type="KEGG" id="bms:BR1237"/>
<dbReference type="KEGG" id="bsi:BS1330_I1233"/>
<dbReference type="PATRIC" id="fig|204722.21.peg.3394"/>
<dbReference type="HOGENOM" id="CLU_072226_1_1_5"/>
<dbReference type="PhylomeDB" id="Q8G074"/>
<dbReference type="Proteomes" id="UP000007104">
    <property type="component" value="Chromosome I"/>
</dbReference>
<dbReference type="GO" id="GO:0015935">
    <property type="term" value="C:small ribosomal subunit"/>
    <property type="evidence" value="ECO:0007669"/>
    <property type="project" value="InterPro"/>
</dbReference>
<dbReference type="GO" id="GO:0019843">
    <property type="term" value="F:rRNA binding"/>
    <property type="evidence" value="ECO:0007669"/>
    <property type="project" value="UniProtKB-UniRule"/>
</dbReference>
<dbReference type="GO" id="GO:0003735">
    <property type="term" value="F:structural constituent of ribosome"/>
    <property type="evidence" value="ECO:0007669"/>
    <property type="project" value="InterPro"/>
</dbReference>
<dbReference type="GO" id="GO:0000049">
    <property type="term" value="F:tRNA binding"/>
    <property type="evidence" value="ECO:0007669"/>
    <property type="project" value="UniProtKB-UniRule"/>
</dbReference>
<dbReference type="GO" id="GO:0006412">
    <property type="term" value="P:translation"/>
    <property type="evidence" value="ECO:0007669"/>
    <property type="project" value="UniProtKB-UniRule"/>
</dbReference>
<dbReference type="CDD" id="cd14869">
    <property type="entry name" value="uS7_Bacteria"/>
    <property type="match status" value="1"/>
</dbReference>
<dbReference type="FunFam" id="1.10.455.10:FF:000001">
    <property type="entry name" value="30S ribosomal protein S7"/>
    <property type="match status" value="1"/>
</dbReference>
<dbReference type="Gene3D" id="1.10.455.10">
    <property type="entry name" value="Ribosomal protein S7 domain"/>
    <property type="match status" value="1"/>
</dbReference>
<dbReference type="HAMAP" id="MF_00480_B">
    <property type="entry name" value="Ribosomal_uS7_B"/>
    <property type="match status" value="1"/>
</dbReference>
<dbReference type="InterPro" id="IPR000235">
    <property type="entry name" value="Ribosomal_uS7"/>
</dbReference>
<dbReference type="InterPro" id="IPR005717">
    <property type="entry name" value="Ribosomal_uS7_bac/org-type"/>
</dbReference>
<dbReference type="InterPro" id="IPR020606">
    <property type="entry name" value="Ribosomal_uS7_CS"/>
</dbReference>
<dbReference type="InterPro" id="IPR023798">
    <property type="entry name" value="Ribosomal_uS7_dom"/>
</dbReference>
<dbReference type="InterPro" id="IPR036823">
    <property type="entry name" value="Ribosomal_uS7_dom_sf"/>
</dbReference>
<dbReference type="NCBIfam" id="TIGR01029">
    <property type="entry name" value="rpsG_bact"/>
    <property type="match status" value="1"/>
</dbReference>
<dbReference type="PANTHER" id="PTHR11205">
    <property type="entry name" value="RIBOSOMAL PROTEIN S7"/>
    <property type="match status" value="1"/>
</dbReference>
<dbReference type="Pfam" id="PF00177">
    <property type="entry name" value="Ribosomal_S7"/>
    <property type="match status" value="1"/>
</dbReference>
<dbReference type="PIRSF" id="PIRSF002122">
    <property type="entry name" value="RPS7p_RPS7a_RPS5e_RPS7o"/>
    <property type="match status" value="1"/>
</dbReference>
<dbReference type="SUPFAM" id="SSF47973">
    <property type="entry name" value="Ribosomal protein S7"/>
    <property type="match status" value="1"/>
</dbReference>
<dbReference type="PROSITE" id="PS00052">
    <property type="entry name" value="RIBOSOMAL_S7"/>
    <property type="match status" value="1"/>
</dbReference>
<proteinExistence type="inferred from homology"/>
<keyword id="KW-0687">Ribonucleoprotein</keyword>
<keyword id="KW-0689">Ribosomal protein</keyword>
<keyword id="KW-0694">RNA-binding</keyword>
<keyword id="KW-0699">rRNA-binding</keyword>
<keyword id="KW-0820">tRNA-binding</keyword>
<reference key="1">
    <citation type="journal article" date="2002" name="Proc. Natl. Acad. Sci. U.S.A.">
        <title>The Brucella suis genome reveals fundamental similarities between animal and plant pathogens and symbionts.</title>
        <authorList>
            <person name="Paulsen I.T."/>
            <person name="Seshadri R."/>
            <person name="Nelson K.E."/>
            <person name="Eisen J.A."/>
            <person name="Heidelberg J.F."/>
            <person name="Read T.D."/>
            <person name="Dodson R.J."/>
            <person name="Umayam L.A."/>
            <person name="Brinkac L.M."/>
            <person name="Beanan M.J."/>
            <person name="Daugherty S.C."/>
            <person name="DeBoy R.T."/>
            <person name="Durkin A.S."/>
            <person name="Kolonay J.F."/>
            <person name="Madupu R."/>
            <person name="Nelson W.C."/>
            <person name="Ayodeji B."/>
            <person name="Kraul M."/>
            <person name="Shetty J."/>
            <person name="Malek J.A."/>
            <person name="Van Aken S.E."/>
            <person name="Riedmuller S."/>
            <person name="Tettelin H."/>
            <person name="Gill S.R."/>
            <person name="White O."/>
            <person name="Salzberg S.L."/>
            <person name="Hoover D.L."/>
            <person name="Lindler L.E."/>
            <person name="Halling S.M."/>
            <person name="Boyle S.M."/>
            <person name="Fraser C.M."/>
        </authorList>
    </citation>
    <scope>NUCLEOTIDE SEQUENCE [LARGE SCALE GENOMIC DNA]</scope>
    <source>
        <strain>1330</strain>
    </source>
</reference>
<reference key="2">
    <citation type="journal article" date="2011" name="J. Bacteriol.">
        <title>Revised genome sequence of Brucella suis 1330.</title>
        <authorList>
            <person name="Tae H."/>
            <person name="Shallom S."/>
            <person name="Settlage R."/>
            <person name="Preston D."/>
            <person name="Adams L.G."/>
            <person name="Garner H.R."/>
        </authorList>
    </citation>
    <scope>NUCLEOTIDE SEQUENCE [LARGE SCALE GENOMIC DNA]</scope>
    <source>
        <strain>1330</strain>
    </source>
</reference>
<feature type="chain" id="PRO_0000124232" description="Small ribosomal subunit protein uS7">
    <location>
        <begin position="1"/>
        <end position="156"/>
    </location>
</feature>
<organism>
    <name type="scientific">Brucella suis biovar 1 (strain 1330)</name>
    <dbReference type="NCBI Taxonomy" id="204722"/>
    <lineage>
        <taxon>Bacteria</taxon>
        <taxon>Pseudomonadati</taxon>
        <taxon>Pseudomonadota</taxon>
        <taxon>Alphaproteobacteria</taxon>
        <taxon>Hyphomicrobiales</taxon>
        <taxon>Brucellaceae</taxon>
        <taxon>Brucella/Ochrobactrum group</taxon>
        <taxon>Brucella</taxon>
    </lineage>
</organism>
<gene>
    <name evidence="1" type="primary">rpsG</name>
    <name type="ordered locus">BR1237</name>
    <name type="ordered locus">BS1330_I1233</name>
</gene>
<accession>Q8G074</accession>
<accession>G0KAF8</accession>